<feature type="chain" id="PRO_0000358587" description="NAD(P)H-quinone oxidoreductase subunit K, chloroplastic">
    <location>
        <begin position="1"/>
        <end position="255"/>
    </location>
</feature>
<feature type="binding site" evidence="1">
    <location>
        <position position="47"/>
    </location>
    <ligand>
        <name>[4Fe-4S] cluster</name>
        <dbReference type="ChEBI" id="CHEBI:49883"/>
    </ligand>
</feature>
<feature type="binding site" evidence="1">
    <location>
        <position position="48"/>
    </location>
    <ligand>
        <name>[4Fe-4S] cluster</name>
        <dbReference type="ChEBI" id="CHEBI:49883"/>
    </ligand>
</feature>
<feature type="binding site" evidence="1">
    <location>
        <position position="112"/>
    </location>
    <ligand>
        <name>[4Fe-4S] cluster</name>
        <dbReference type="ChEBI" id="CHEBI:49883"/>
    </ligand>
</feature>
<feature type="binding site" evidence="1">
    <location>
        <position position="143"/>
    </location>
    <ligand>
        <name>[4Fe-4S] cluster</name>
        <dbReference type="ChEBI" id="CHEBI:49883"/>
    </ligand>
</feature>
<geneLocation type="chloroplast"/>
<evidence type="ECO:0000255" key="1">
    <source>
        <dbReference type="HAMAP-Rule" id="MF_01356"/>
    </source>
</evidence>
<sequence length="255" mass="28442">MKPISNPMGLSPTKQNVYDSVVLTTLQDVSNWVRLSSLWPLLYGTSCCFIEFASLIGSRFDFDRYGLVPRSSPRQADLIITAGTVTMKMAPSLVRLYEQMPEPKYVIAMGACTITGGMFSTDSYSTVRGVDKLIPVDVYLPGCPPKPEAIVDAIIKLRKKVAQENGQDRLNQNQQHRCFSVTHRLQPVPAVHNGEYERNITRQVPSISLDSTLQSPFEQILQSSFESVSETTLIDSQRYDNQYLQGAEIETGGLE</sequence>
<accession>Q32RI3</accession>
<comment type="function">
    <text evidence="1">NDH shuttles electrons from NAD(P)H:plastoquinone, via FMN and iron-sulfur (Fe-S) centers, to quinones in the photosynthetic chain and possibly in a chloroplast respiratory chain. The immediate electron acceptor for the enzyme in this species is believed to be plastoquinone. Couples the redox reaction to proton translocation, and thus conserves the redox energy in a proton gradient.</text>
</comment>
<comment type="catalytic activity">
    <reaction evidence="1">
        <text>a plastoquinone + NADH + (n+1) H(+)(in) = a plastoquinol + NAD(+) + n H(+)(out)</text>
        <dbReference type="Rhea" id="RHEA:42608"/>
        <dbReference type="Rhea" id="RHEA-COMP:9561"/>
        <dbReference type="Rhea" id="RHEA-COMP:9562"/>
        <dbReference type="ChEBI" id="CHEBI:15378"/>
        <dbReference type="ChEBI" id="CHEBI:17757"/>
        <dbReference type="ChEBI" id="CHEBI:57540"/>
        <dbReference type="ChEBI" id="CHEBI:57945"/>
        <dbReference type="ChEBI" id="CHEBI:62192"/>
    </reaction>
</comment>
<comment type="catalytic activity">
    <reaction evidence="1">
        <text>a plastoquinone + NADPH + (n+1) H(+)(in) = a plastoquinol + NADP(+) + n H(+)(out)</text>
        <dbReference type="Rhea" id="RHEA:42612"/>
        <dbReference type="Rhea" id="RHEA-COMP:9561"/>
        <dbReference type="Rhea" id="RHEA-COMP:9562"/>
        <dbReference type="ChEBI" id="CHEBI:15378"/>
        <dbReference type="ChEBI" id="CHEBI:17757"/>
        <dbReference type="ChEBI" id="CHEBI:57783"/>
        <dbReference type="ChEBI" id="CHEBI:58349"/>
        <dbReference type="ChEBI" id="CHEBI:62192"/>
    </reaction>
</comment>
<comment type="cofactor">
    <cofactor evidence="1">
        <name>[4Fe-4S] cluster</name>
        <dbReference type="ChEBI" id="CHEBI:49883"/>
    </cofactor>
    <text evidence="1">Binds 1 [4Fe-4S] cluster.</text>
</comment>
<comment type="subunit">
    <text evidence="1">NDH is composed of at least 16 different subunits, 5 of which are encoded in the nucleus.</text>
</comment>
<comment type="subcellular location">
    <subcellularLocation>
        <location evidence="1">Plastid</location>
        <location evidence="1">Chloroplast thylakoid membrane</location>
        <topology evidence="1">Peripheral membrane protein</topology>
        <orientation evidence="1">Stromal side</orientation>
    </subcellularLocation>
</comment>
<comment type="similarity">
    <text evidence="1">Belongs to the complex I 20 kDa subunit family.</text>
</comment>
<reference key="1">
    <citation type="journal article" date="2005" name="BMC Biol.">
        <title>The complete chloroplast DNA sequences of the charophycean green algae Staurastrum and Zygnema reveal that the chloroplast genome underwent extensive changes during the evolution of the Zygnematales.</title>
        <authorList>
            <person name="Turmel M."/>
            <person name="Otis C."/>
            <person name="Lemieux C."/>
        </authorList>
    </citation>
    <scope>NUCLEOTIDE SEQUENCE [LARGE SCALE GENOMIC DNA]</scope>
</reference>
<proteinExistence type="inferred from homology"/>
<organism>
    <name type="scientific">Zygnema circumcarinatum</name>
    <name type="common">Green alga</name>
    <dbReference type="NCBI Taxonomy" id="35869"/>
    <lineage>
        <taxon>Eukaryota</taxon>
        <taxon>Viridiplantae</taxon>
        <taxon>Streptophyta</taxon>
        <taxon>Zygnematophyceae</taxon>
        <taxon>Zygnematophycidae</taxon>
        <taxon>Zygnematales</taxon>
        <taxon>Zygnemataceae</taxon>
        <taxon>Zygnema</taxon>
    </lineage>
</organism>
<protein>
    <recommendedName>
        <fullName evidence="1">NAD(P)H-quinone oxidoreductase subunit K, chloroplastic</fullName>
        <ecNumber evidence="1">7.1.1.-</ecNumber>
    </recommendedName>
    <alternativeName>
        <fullName evidence="1">NAD(P)H dehydrogenase subunit K</fullName>
    </alternativeName>
    <alternativeName>
        <fullName evidence="1">NADH-plastoquinone oxidoreductase subunit K</fullName>
    </alternativeName>
</protein>
<keyword id="KW-0004">4Fe-4S</keyword>
<keyword id="KW-0150">Chloroplast</keyword>
<keyword id="KW-0408">Iron</keyword>
<keyword id="KW-0411">Iron-sulfur</keyword>
<keyword id="KW-0472">Membrane</keyword>
<keyword id="KW-0479">Metal-binding</keyword>
<keyword id="KW-0520">NAD</keyword>
<keyword id="KW-0521">NADP</keyword>
<keyword id="KW-0934">Plastid</keyword>
<keyword id="KW-0618">Plastoquinone</keyword>
<keyword id="KW-0874">Quinone</keyword>
<keyword id="KW-0793">Thylakoid</keyword>
<keyword id="KW-1278">Translocase</keyword>
<keyword id="KW-0813">Transport</keyword>
<dbReference type="EC" id="7.1.1.-" evidence="1"/>
<dbReference type="EMBL" id="AY958086">
    <property type="protein sequence ID" value="AAX45822.1"/>
    <property type="molecule type" value="Genomic_DNA"/>
</dbReference>
<dbReference type="RefSeq" id="YP_636543.3">
    <property type="nucleotide sequence ID" value="NC_008117.1"/>
</dbReference>
<dbReference type="SMR" id="Q32RI3"/>
<dbReference type="GeneID" id="4108142"/>
<dbReference type="GO" id="GO:0009535">
    <property type="term" value="C:chloroplast thylakoid membrane"/>
    <property type="evidence" value="ECO:0007669"/>
    <property type="project" value="UniProtKB-SubCell"/>
</dbReference>
<dbReference type="GO" id="GO:0045271">
    <property type="term" value="C:respiratory chain complex I"/>
    <property type="evidence" value="ECO:0007669"/>
    <property type="project" value="TreeGrafter"/>
</dbReference>
<dbReference type="GO" id="GO:0051539">
    <property type="term" value="F:4 iron, 4 sulfur cluster binding"/>
    <property type="evidence" value="ECO:0007669"/>
    <property type="project" value="UniProtKB-KW"/>
</dbReference>
<dbReference type="GO" id="GO:0005506">
    <property type="term" value="F:iron ion binding"/>
    <property type="evidence" value="ECO:0007669"/>
    <property type="project" value="UniProtKB-UniRule"/>
</dbReference>
<dbReference type="GO" id="GO:0008137">
    <property type="term" value="F:NADH dehydrogenase (ubiquinone) activity"/>
    <property type="evidence" value="ECO:0007669"/>
    <property type="project" value="InterPro"/>
</dbReference>
<dbReference type="GO" id="GO:0048038">
    <property type="term" value="F:quinone binding"/>
    <property type="evidence" value="ECO:0007669"/>
    <property type="project" value="UniProtKB-KW"/>
</dbReference>
<dbReference type="GO" id="GO:0009060">
    <property type="term" value="P:aerobic respiration"/>
    <property type="evidence" value="ECO:0007669"/>
    <property type="project" value="TreeGrafter"/>
</dbReference>
<dbReference type="GO" id="GO:0015990">
    <property type="term" value="P:electron transport coupled proton transport"/>
    <property type="evidence" value="ECO:0007669"/>
    <property type="project" value="TreeGrafter"/>
</dbReference>
<dbReference type="GO" id="GO:0019684">
    <property type="term" value="P:photosynthesis, light reaction"/>
    <property type="evidence" value="ECO:0007669"/>
    <property type="project" value="UniProtKB-UniRule"/>
</dbReference>
<dbReference type="FunFam" id="3.40.50.12280:FF:000003">
    <property type="entry name" value="NAD(P)H-quinone oxidoreductase subunit K, chloroplastic"/>
    <property type="match status" value="1"/>
</dbReference>
<dbReference type="Gene3D" id="3.40.50.12280">
    <property type="match status" value="1"/>
</dbReference>
<dbReference type="HAMAP" id="MF_01356">
    <property type="entry name" value="NDH1_NuoB"/>
    <property type="match status" value="1"/>
</dbReference>
<dbReference type="InterPro" id="IPR006137">
    <property type="entry name" value="NADH_UbQ_OxRdtase-like_20kDa"/>
</dbReference>
<dbReference type="InterPro" id="IPR006138">
    <property type="entry name" value="NADH_UQ_OxRdtase_20Kd_su"/>
</dbReference>
<dbReference type="NCBIfam" id="TIGR01957">
    <property type="entry name" value="nuoB_fam"/>
    <property type="match status" value="1"/>
</dbReference>
<dbReference type="NCBIfam" id="NF005012">
    <property type="entry name" value="PRK06411.1"/>
    <property type="match status" value="1"/>
</dbReference>
<dbReference type="PANTHER" id="PTHR11995">
    <property type="entry name" value="NADH DEHYDROGENASE"/>
    <property type="match status" value="1"/>
</dbReference>
<dbReference type="PANTHER" id="PTHR11995:SF14">
    <property type="entry name" value="NADH DEHYDROGENASE [UBIQUINONE] IRON-SULFUR PROTEIN 7, MITOCHONDRIAL"/>
    <property type="match status" value="1"/>
</dbReference>
<dbReference type="Pfam" id="PF01058">
    <property type="entry name" value="Oxidored_q6"/>
    <property type="match status" value="1"/>
</dbReference>
<dbReference type="SUPFAM" id="SSF56770">
    <property type="entry name" value="HydA/Nqo6-like"/>
    <property type="match status" value="1"/>
</dbReference>
<dbReference type="PROSITE" id="PS01150">
    <property type="entry name" value="COMPLEX1_20K"/>
    <property type="match status" value="1"/>
</dbReference>
<gene>
    <name evidence="1" type="primary">ndhK</name>
</gene>
<name>NDHK_ZYGCR</name>